<sequence length="244" mass="25975">MRRVAVIIPARFGAQRFPGKPLADLAGQPLIAHVVDRARRARGVDAVAVATDDARIAAAAEAAGAAAILTGPASTGTDRVAEAARKLMPSPDVVVNLQGDEPLIEPEAIETLVRAMEGGVEMATLARPLEPEELERTQVVKVVTDRHGDALYFSRAPIPHRRAGGVSALARAHVGIYAFTAAFLQEFAALPPGRLEAEESLEQLRALEHGHRIRVADTAYRGFGIDTPEDLDRARALLAAGPRE</sequence>
<keyword id="KW-0963">Cytoplasm</keyword>
<keyword id="KW-0448">Lipopolysaccharide biosynthesis</keyword>
<keyword id="KW-0548">Nucleotidyltransferase</keyword>
<keyword id="KW-1185">Reference proteome</keyword>
<keyword id="KW-0808">Transferase</keyword>
<proteinExistence type="inferred from homology"/>
<gene>
    <name evidence="1" type="primary">kdsB</name>
    <name type="ordered locus">Anae109_4319</name>
</gene>
<feature type="chain" id="PRO_1000091857" description="3-deoxy-manno-octulosonate cytidylyltransferase">
    <location>
        <begin position="1"/>
        <end position="244"/>
    </location>
</feature>
<protein>
    <recommendedName>
        <fullName evidence="1">3-deoxy-manno-octulosonate cytidylyltransferase</fullName>
        <ecNumber evidence="1">2.7.7.38</ecNumber>
    </recommendedName>
    <alternativeName>
        <fullName evidence="1">CMP-2-keto-3-deoxyoctulosonic acid synthase</fullName>
        <shortName evidence="1">CKS</shortName>
        <shortName evidence="1">CMP-KDO synthase</shortName>
    </alternativeName>
</protein>
<dbReference type="EC" id="2.7.7.38" evidence="1"/>
<dbReference type="EMBL" id="CP000769">
    <property type="protein sequence ID" value="ABS28497.1"/>
    <property type="molecule type" value="Genomic_DNA"/>
</dbReference>
<dbReference type="RefSeq" id="WP_012099142.1">
    <property type="nucleotide sequence ID" value="NC_009675.1"/>
</dbReference>
<dbReference type="SMR" id="A7HIF1"/>
<dbReference type="STRING" id="404589.Anae109_4319"/>
<dbReference type="KEGG" id="afw:Anae109_4319"/>
<dbReference type="eggNOG" id="COG1212">
    <property type="taxonomic scope" value="Bacteria"/>
</dbReference>
<dbReference type="HOGENOM" id="CLU_065038_0_1_7"/>
<dbReference type="OrthoDB" id="9815559at2"/>
<dbReference type="UniPathway" id="UPA00030"/>
<dbReference type="UniPathway" id="UPA00358">
    <property type="reaction ID" value="UER00476"/>
</dbReference>
<dbReference type="Proteomes" id="UP000006382">
    <property type="component" value="Chromosome"/>
</dbReference>
<dbReference type="GO" id="GO:0005829">
    <property type="term" value="C:cytosol"/>
    <property type="evidence" value="ECO:0007669"/>
    <property type="project" value="TreeGrafter"/>
</dbReference>
<dbReference type="GO" id="GO:0008690">
    <property type="term" value="F:3-deoxy-manno-octulosonate cytidylyltransferase activity"/>
    <property type="evidence" value="ECO:0007669"/>
    <property type="project" value="UniProtKB-UniRule"/>
</dbReference>
<dbReference type="GO" id="GO:0033468">
    <property type="term" value="P:CMP-keto-3-deoxy-D-manno-octulosonic acid biosynthetic process"/>
    <property type="evidence" value="ECO:0007669"/>
    <property type="project" value="UniProtKB-UniRule"/>
</dbReference>
<dbReference type="GO" id="GO:0009103">
    <property type="term" value="P:lipopolysaccharide biosynthetic process"/>
    <property type="evidence" value="ECO:0007669"/>
    <property type="project" value="UniProtKB-UniRule"/>
</dbReference>
<dbReference type="CDD" id="cd02517">
    <property type="entry name" value="CMP-KDO-Synthetase"/>
    <property type="match status" value="1"/>
</dbReference>
<dbReference type="FunFam" id="3.90.550.10:FF:000011">
    <property type="entry name" value="3-deoxy-manno-octulosonate cytidylyltransferase"/>
    <property type="match status" value="1"/>
</dbReference>
<dbReference type="Gene3D" id="3.90.550.10">
    <property type="entry name" value="Spore Coat Polysaccharide Biosynthesis Protein SpsA, Chain A"/>
    <property type="match status" value="1"/>
</dbReference>
<dbReference type="HAMAP" id="MF_00057">
    <property type="entry name" value="KdsB"/>
    <property type="match status" value="1"/>
</dbReference>
<dbReference type="InterPro" id="IPR003329">
    <property type="entry name" value="Cytidylyl_trans"/>
</dbReference>
<dbReference type="InterPro" id="IPR004528">
    <property type="entry name" value="KdsB"/>
</dbReference>
<dbReference type="InterPro" id="IPR029044">
    <property type="entry name" value="Nucleotide-diphossugar_trans"/>
</dbReference>
<dbReference type="NCBIfam" id="TIGR00466">
    <property type="entry name" value="kdsB"/>
    <property type="match status" value="1"/>
</dbReference>
<dbReference type="NCBIfam" id="NF003950">
    <property type="entry name" value="PRK05450.1-3"/>
    <property type="match status" value="1"/>
</dbReference>
<dbReference type="NCBIfam" id="NF003952">
    <property type="entry name" value="PRK05450.1-5"/>
    <property type="match status" value="1"/>
</dbReference>
<dbReference type="NCBIfam" id="NF009905">
    <property type="entry name" value="PRK13368.1"/>
    <property type="match status" value="1"/>
</dbReference>
<dbReference type="PANTHER" id="PTHR42866">
    <property type="entry name" value="3-DEOXY-MANNO-OCTULOSONATE CYTIDYLYLTRANSFERASE"/>
    <property type="match status" value="1"/>
</dbReference>
<dbReference type="PANTHER" id="PTHR42866:SF2">
    <property type="entry name" value="3-DEOXY-MANNO-OCTULOSONATE CYTIDYLYLTRANSFERASE, MITOCHONDRIAL"/>
    <property type="match status" value="1"/>
</dbReference>
<dbReference type="Pfam" id="PF02348">
    <property type="entry name" value="CTP_transf_3"/>
    <property type="match status" value="1"/>
</dbReference>
<dbReference type="SUPFAM" id="SSF53448">
    <property type="entry name" value="Nucleotide-diphospho-sugar transferases"/>
    <property type="match status" value="1"/>
</dbReference>
<reference key="1">
    <citation type="journal article" date="2015" name="Genome Announc.">
        <title>Complete genome sequence of Anaeromyxobacter sp. Fw109-5, an anaerobic, metal-reducing bacterium isolated from a contaminated subsurface environment.</title>
        <authorList>
            <person name="Hwang C."/>
            <person name="Copeland A."/>
            <person name="Lucas S."/>
            <person name="Lapidus A."/>
            <person name="Barry K."/>
            <person name="Glavina Del Rio T."/>
            <person name="Dalin E."/>
            <person name="Tice H."/>
            <person name="Pitluck S."/>
            <person name="Sims D."/>
            <person name="Brettin T."/>
            <person name="Bruce D.C."/>
            <person name="Detter J.C."/>
            <person name="Han C.S."/>
            <person name="Schmutz J."/>
            <person name="Larimer F.W."/>
            <person name="Land M.L."/>
            <person name="Hauser L.J."/>
            <person name="Kyrpides N."/>
            <person name="Lykidis A."/>
            <person name="Richardson P."/>
            <person name="Belieav A."/>
            <person name="Sanford R.A."/>
            <person name="Loeffler F.E."/>
            <person name="Fields M.W."/>
        </authorList>
    </citation>
    <scope>NUCLEOTIDE SEQUENCE [LARGE SCALE GENOMIC DNA]</scope>
    <source>
        <strain>Fw109-5</strain>
    </source>
</reference>
<name>KDSB_ANADF</name>
<evidence type="ECO:0000255" key="1">
    <source>
        <dbReference type="HAMAP-Rule" id="MF_00057"/>
    </source>
</evidence>
<organism>
    <name type="scientific">Anaeromyxobacter sp. (strain Fw109-5)</name>
    <dbReference type="NCBI Taxonomy" id="404589"/>
    <lineage>
        <taxon>Bacteria</taxon>
        <taxon>Pseudomonadati</taxon>
        <taxon>Myxococcota</taxon>
        <taxon>Myxococcia</taxon>
        <taxon>Myxococcales</taxon>
        <taxon>Cystobacterineae</taxon>
        <taxon>Anaeromyxobacteraceae</taxon>
        <taxon>Anaeromyxobacter</taxon>
    </lineage>
</organism>
<accession>A7HIF1</accession>
<comment type="function">
    <text evidence="1">Activates KDO (a required 8-carbon sugar) for incorporation into bacterial lipopolysaccharide in Gram-negative bacteria.</text>
</comment>
<comment type="catalytic activity">
    <reaction evidence="1">
        <text>3-deoxy-alpha-D-manno-oct-2-ulosonate + CTP = CMP-3-deoxy-beta-D-manno-octulosonate + diphosphate</text>
        <dbReference type="Rhea" id="RHEA:23448"/>
        <dbReference type="ChEBI" id="CHEBI:33019"/>
        <dbReference type="ChEBI" id="CHEBI:37563"/>
        <dbReference type="ChEBI" id="CHEBI:85986"/>
        <dbReference type="ChEBI" id="CHEBI:85987"/>
        <dbReference type="EC" id="2.7.7.38"/>
    </reaction>
</comment>
<comment type="pathway">
    <text evidence="1">Nucleotide-sugar biosynthesis; CMP-3-deoxy-D-manno-octulosonate biosynthesis; CMP-3-deoxy-D-manno-octulosonate from 3-deoxy-D-manno-octulosonate and CTP: step 1/1.</text>
</comment>
<comment type="pathway">
    <text evidence="1">Bacterial outer membrane biogenesis; lipopolysaccharide biosynthesis.</text>
</comment>
<comment type="subcellular location">
    <subcellularLocation>
        <location evidence="1">Cytoplasm</location>
    </subcellularLocation>
</comment>
<comment type="similarity">
    <text evidence="1">Belongs to the KdsB family.</text>
</comment>